<reference key="1">
    <citation type="journal article" date="2008" name="Genetics">
        <title>Sequential elimination of major-effect contributors identifies additional quantitative trait loci conditioning high-temperature growth in yeast.</title>
        <authorList>
            <person name="Sinha H."/>
            <person name="David L."/>
            <person name="Pascon R.C."/>
            <person name="Clauder-Muenster S."/>
            <person name="Krishnakumar S."/>
            <person name="Nguyen M."/>
            <person name="Shi G."/>
            <person name="Dean J."/>
            <person name="Davis R.W."/>
            <person name="Oefner P.J."/>
            <person name="McCusker J.H."/>
            <person name="Steinmetz L.M."/>
        </authorList>
    </citation>
    <scope>NUCLEOTIDE SEQUENCE [GENOMIC DNA]</scope>
    <scope>VARIANTS SER-7; LEU-71; SER-193; SER-409; GLY-428; SER-436 AND ASN-474</scope>
    <source>
        <strain>ATCC 200060 / W303</strain>
        <strain>S103</strain>
        <strain>SK1</strain>
        <strain>V1-09</strain>
        <strain>YJM 1129</strain>
        <strain>YJM 269</strain>
        <strain>YJM 270</strain>
        <strain>YJM 320</strain>
        <strain>YJM 326</strain>
        <strain>YJM 339</strain>
        <strain>YJM 627</strain>
        <strain>YJM230</strain>
    </source>
</reference>
<reference key="2">
    <citation type="journal article" date="1997" name="Nature">
        <title>The nucleotide sequence of Saccharomyces cerevisiae chromosome XIV and its evolutionary implications.</title>
        <authorList>
            <person name="Philippsen P."/>
            <person name="Kleine K."/>
            <person name="Poehlmann R."/>
            <person name="Duesterhoeft A."/>
            <person name="Hamberg K."/>
            <person name="Hegemann J.H."/>
            <person name="Obermaier B."/>
            <person name="Urrestarazu L.A."/>
            <person name="Aert R."/>
            <person name="Albermann K."/>
            <person name="Altmann R."/>
            <person name="Andre B."/>
            <person name="Baladron V."/>
            <person name="Ballesta J.P.G."/>
            <person name="Becam A.-M."/>
            <person name="Beinhauer J.D."/>
            <person name="Boskovic J."/>
            <person name="Buitrago M.J."/>
            <person name="Bussereau F."/>
            <person name="Coster F."/>
            <person name="Crouzet M."/>
            <person name="D'Angelo M."/>
            <person name="Dal Pero F."/>
            <person name="De Antoni A."/>
            <person name="del Rey F."/>
            <person name="Doignon F."/>
            <person name="Domdey H."/>
            <person name="Dubois E."/>
            <person name="Fiedler T.A."/>
            <person name="Fleig U."/>
            <person name="Floeth M."/>
            <person name="Fritz C."/>
            <person name="Gaillardin C."/>
            <person name="Garcia-Cantalejo J.M."/>
            <person name="Glansdorff N."/>
            <person name="Goffeau A."/>
            <person name="Gueldener U."/>
            <person name="Herbert C.J."/>
            <person name="Heumann K."/>
            <person name="Heuss-Neitzel D."/>
            <person name="Hilbert H."/>
            <person name="Hinni K."/>
            <person name="Iraqui Houssaini I."/>
            <person name="Jacquet M."/>
            <person name="Jimenez A."/>
            <person name="Jonniaux J.-L."/>
            <person name="Karpfinger-Hartl L."/>
            <person name="Lanfranchi G."/>
            <person name="Lepingle A."/>
            <person name="Levesque H."/>
            <person name="Lyck R."/>
            <person name="Maftahi M."/>
            <person name="Mallet L."/>
            <person name="Maurer C.T.C."/>
            <person name="Messenguy F."/>
            <person name="Mewes H.-W."/>
            <person name="Moestl D."/>
            <person name="Nasr F."/>
            <person name="Nicaud J.-M."/>
            <person name="Niedenthal R.K."/>
            <person name="Pandolfo D."/>
            <person name="Pierard A."/>
            <person name="Piravandi E."/>
            <person name="Planta R.J."/>
            <person name="Pohl T.M."/>
            <person name="Purnelle B."/>
            <person name="Rebischung C."/>
            <person name="Remacha M.A."/>
            <person name="Revuelta J.L."/>
            <person name="Rinke M."/>
            <person name="Saiz J.E."/>
            <person name="Sartorello F."/>
            <person name="Scherens B."/>
            <person name="Sen-Gupta M."/>
            <person name="Soler-Mira A."/>
            <person name="Urbanus J.H.M."/>
            <person name="Valle G."/>
            <person name="Van Dyck L."/>
            <person name="Verhasselt P."/>
            <person name="Vierendeels F."/>
            <person name="Vissers S."/>
            <person name="Voet M."/>
            <person name="Volckaert G."/>
            <person name="Wach A."/>
            <person name="Wambutt R."/>
            <person name="Wedler H."/>
            <person name="Zollner A."/>
            <person name="Hani J."/>
        </authorList>
    </citation>
    <scope>NUCLEOTIDE SEQUENCE [LARGE SCALE GENOMIC DNA]</scope>
    <source>
        <strain>ATCC 204508 / S288c</strain>
    </source>
</reference>
<reference key="3">
    <citation type="journal article" date="2014" name="G3 (Bethesda)">
        <title>The reference genome sequence of Saccharomyces cerevisiae: Then and now.</title>
        <authorList>
            <person name="Engel S.R."/>
            <person name="Dietrich F.S."/>
            <person name="Fisk D.G."/>
            <person name="Binkley G."/>
            <person name="Balakrishnan R."/>
            <person name="Costanzo M.C."/>
            <person name="Dwight S.S."/>
            <person name="Hitz B.C."/>
            <person name="Karra K."/>
            <person name="Nash R.S."/>
            <person name="Weng S."/>
            <person name="Wong E.D."/>
            <person name="Lloyd P."/>
            <person name="Skrzypek M.S."/>
            <person name="Miyasato S.R."/>
            <person name="Simison M."/>
            <person name="Cherry J.M."/>
        </authorList>
    </citation>
    <scope>GENOME REANNOTATION</scope>
    <source>
        <strain>ATCC 204508 / S288c</strain>
    </source>
</reference>
<reference key="4">
    <citation type="journal article" date="2007" name="Genome Res.">
        <title>Approaching a complete repository of sequence-verified protein-encoding clones for Saccharomyces cerevisiae.</title>
        <authorList>
            <person name="Hu Y."/>
            <person name="Rolfs A."/>
            <person name="Bhullar B."/>
            <person name="Murthy T.V.S."/>
            <person name="Zhu C."/>
            <person name="Berger M.F."/>
            <person name="Camargo A.A."/>
            <person name="Kelley F."/>
            <person name="McCarron S."/>
            <person name="Jepson D."/>
            <person name="Richardson A."/>
            <person name="Raphael J."/>
            <person name="Moreira D."/>
            <person name="Taycher E."/>
            <person name="Zuo D."/>
            <person name="Mohr S."/>
            <person name="Kane M.F."/>
            <person name="Williamson J."/>
            <person name="Simpson A.J.G."/>
            <person name="Bulyk M.L."/>
            <person name="Harlow E."/>
            <person name="Marsischky G."/>
            <person name="Kolodner R.D."/>
            <person name="LaBaer J."/>
        </authorList>
    </citation>
    <scope>NUCLEOTIDE SEQUENCE [GENOMIC DNA]</scope>
    <source>
        <strain>ATCC 204508 / S288c</strain>
    </source>
</reference>
<reference key="5">
    <citation type="journal article" date="2003" name="Mol. Biol. Cell">
        <title>Urmylation: a ubiquitin-like pathway that functions during invasive growth and budding in yeast.</title>
        <authorList>
            <person name="Goehring A.S."/>
            <person name="Rivers D.M."/>
            <person name="Sprague G.F. Jr."/>
        </authorList>
    </citation>
    <scope>FUNCTION</scope>
</reference>
<reference key="6">
    <citation type="journal article" date="2003" name="Nature">
        <title>Global analysis of protein localization in budding yeast.</title>
        <authorList>
            <person name="Huh W.-K."/>
            <person name="Falvo J.V."/>
            <person name="Gerke L.C."/>
            <person name="Carroll A.S."/>
            <person name="Howson R.W."/>
            <person name="Weissman J.S."/>
            <person name="O'Shea E.K."/>
        </authorList>
    </citation>
    <scope>SUBCELLULAR LOCATION [LARGE SCALE ANALYSIS]</scope>
</reference>
<reference key="7">
    <citation type="journal article" date="2003" name="Nature">
        <title>Global analysis of protein expression in yeast.</title>
        <authorList>
            <person name="Ghaemmaghami S."/>
            <person name="Huh W.-K."/>
            <person name="Bower K."/>
            <person name="Howson R.W."/>
            <person name="Belle A."/>
            <person name="Dephoure N."/>
            <person name="O'Shea E.K."/>
            <person name="Weissman J.S."/>
        </authorList>
    </citation>
    <scope>LEVEL OF PROTEIN EXPRESSION [LARGE SCALE ANALYSIS]</scope>
</reference>
<reference key="8">
    <citation type="journal article" date="2003" name="Proc. Natl. Acad. Sci. U.S.A.">
        <title>Systematic, genome-wide identification of host genes affecting replication of a positive-strand RNA virus.</title>
        <authorList>
            <person name="Kushner D.B."/>
            <person name="Lindenbach B.D."/>
            <person name="Grdzelishvili V.Z."/>
            <person name="Noueiry A.O."/>
            <person name="Paul S.M."/>
            <person name="Ahlquist P."/>
        </authorList>
    </citation>
    <scope>FUNCTION</scope>
</reference>
<reference key="9">
    <citation type="journal article" date="2007" name="J. Proteome Res.">
        <title>Large-scale phosphorylation analysis of alpha-factor-arrested Saccharomyces cerevisiae.</title>
        <authorList>
            <person name="Li X."/>
            <person name="Gerber S.A."/>
            <person name="Rudner A.D."/>
            <person name="Beausoleil S.A."/>
            <person name="Haas W."/>
            <person name="Villen J."/>
            <person name="Elias J.E."/>
            <person name="Gygi S.P."/>
        </authorList>
    </citation>
    <scope>PHOSPHORYLATION [LARGE SCALE ANALYSIS] AT SER-489</scope>
    <scope>IDENTIFICATION BY MASS SPECTROMETRY [LARGE SCALE ANALYSIS]</scope>
    <source>
        <strain>ADR376</strain>
    </source>
</reference>
<reference key="10">
    <citation type="journal article" date="2008" name="J. Biol. Chem.">
        <title>Thio-modification of yeast cytosolic tRNA requires a ubiquitin-related system that resembles bacterial sulfur transfer systems.</title>
        <authorList>
            <person name="Nakai Y."/>
            <person name="Nakai M."/>
            <person name="Hayashi H."/>
        </authorList>
    </citation>
    <scope>FUNCTION</scope>
    <scope>SUBCELLULAR LOCATION</scope>
</reference>
<reference key="11">
    <citation type="journal article" date="2008" name="RNA">
        <title>A genome-wide screen identifies genes required for formation of the wobble nucleoside 5-methoxycarbonylmethyl-2-thiouridine in Saccharomyces cerevisiae.</title>
        <authorList>
            <person name="Huang B."/>
            <person name="Lu J."/>
            <person name="Bystroem A.S."/>
        </authorList>
    </citation>
    <scope>FUNCTION</scope>
</reference>
<reference key="12">
    <citation type="journal article" date="2009" name="Nature">
        <title>Ubiquitin-related modifier Urm1 acts as a sulphur carrier in thiolation of eukaryotic transfer RNA.</title>
        <authorList>
            <person name="Leidel S."/>
            <person name="Pedrioli P.G.A."/>
            <person name="Bucher T."/>
            <person name="Brost R."/>
            <person name="Costanzo M."/>
            <person name="Schmidt A."/>
            <person name="Aebersold R."/>
            <person name="Boone C."/>
            <person name="Hofmann K."/>
            <person name="Peter M."/>
        </authorList>
    </citation>
    <scope>FUNCTION IN 2-THIOLATION OF TRNA</scope>
    <scope>INTERACTION WITH NCS6 AND URM1</scope>
</reference>
<reference key="13">
    <citation type="journal article" date="2009" name="Nucleic Acids Res.">
        <title>Mechanistic characterization of the sulfur-relay system for eukaryotic 2-thiouridine biogenesis at tRNA wobble positions.</title>
        <authorList>
            <person name="Noma A."/>
            <person name="Sakaguchi Y."/>
            <person name="Suzuki T."/>
        </authorList>
    </citation>
    <scope>FUNCTION IN 2-THIOLATION OF TRNA</scope>
</reference>
<dbReference type="EMBL" id="EF125216">
    <property type="protein sequence ID" value="ABN58538.1"/>
    <property type="molecule type" value="Genomic_DNA"/>
</dbReference>
<dbReference type="EMBL" id="EF125217">
    <property type="protein sequence ID" value="ABN58547.1"/>
    <property type="molecule type" value="Genomic_DNA"/>
</dbReference>
<dbReference type="EMBL" id="EF125218">
    <property type="protein sequence ID" value="ABN58556.1"/>
    <property type="molecule type" value="Genomic_DNA"/>
</dbReference>
<dbReference type="EMBL" id="EF125219">
    <property type="protein sequence ID" value="ABN58565.1"/>
    <property type="molecule type" value="Genomic_DNA"/>
</dbReference>
<dbReference type="EMBL" id="EF125220">
    <property type="protein sequence ID" value="ABN58574.1"/>
    <property type="molecule type" value="Genomic_DNA"/>
</dbReference>
<dbReference type="EMBL" id="EF125221">
    <property type="protein sequence ID" value="ABN58583.1"/>
    <property type="molecule type" value="Genomic_DNA"/>
</dbReference>
<dbReference type="EMBL" id="EF125222">
    <property type="protein sequence ID" value="ABN58592.1"/>
    <property type="molecule type" value="Genomic_DNA"/>
</dbReference>
<dbReference type="EMBL" id="EF125223">
    <property type="protein sequence ID" value="ABN58601.1"/>
    <property type="molecule type" value="Genomic_DNA"/>
</dbReference>
<dbReference type="EMBL" id="EF125224">
    <property type="protein sequence ID" value="ABN58610.1"/>
    <property type="molecule type" value="Genomic_DNA"/>
</dbReference>
<dbReference type="EMBL" id="EF125225">
    <property type="protein sequence ID" value="ABN58619.1"/>
    <property type="molecule type" value="Genomic_DNA"/>
</dbReference>
<dbReference type="EMBL" id="EF125226">
    <property type="protein sequence ID" value="ABN58628.1"/>
    <property type="molecule type" value="Genomic_DNA"/>
</dbReference>
<dbReference type="EMBL" id="EF125228">
    <property type="protein sequence ID" value="ABN58646.1"/>
    <property type="molecule type" value="Genomic_DNA"/>
</dbReference>
<dbReference type="EMBL" id="Z69382">
    <property type="protein sequence ID" value="CAA93388.1"/>
    <property type="molecule type" value="Genomic_DNA"/>
</dbReference>
<dbReference type="EMBL" id="Z71396">
    <property type="protein sequence ID" value="CAA96001.1"/>
    <property type="molecule type" value="Genomic_DNA"/>
</dbReference>
<dbReference type="EMBL" id="AY723860">
    <property type="protein sequence ID" value="AAU09777.1"/>
    <property type="molecule type" value="Genomic_DNA"/>
</dbReference>
<dbReference type="EMBL" id="BK006947">
    <property type="protein sequence ID" value="DAA10429.1"/>
    <property type="molecule type" value="Genomic_DNA"/>
</dbReference>
<dbReference type="PIR" id="S63060">
    <property type="entry name" value="S63060"/>
</dbReference>
<dbReference type="RefSeq" id="NP_014280.3">
    <property type="nucleotide sequence ID" value="NM_001182957.3"/>
</dbReference>
<dbReference type="BioGRID" id="35707">
    <property type="interactions" value="350"/>
</dbReference>
<dbReference type="DIP" id="DIP-6649N"/>
<dbReference type="FunCoup" id="P53923">
    <property type="interactions" value="215"/>
</dbReference>
<dbReference type="IntAct" id="P53923">
    <property type="interactions" value="7"/>
</dbReference>
<dbReference type="MINT" id="P53923"/>
<dbReference type="STRING" id="4932.YNL119W"/>
<dbReference type="iPTMnet" id="P53923"/>
<dbReference type="PaxDb" id="4932-YNL119W"/>
<dbReference type="PeptideAtlas" id="P53923"/>
<dbReference type="EnsemblFungi" id="YNL119W_mRNA">
    <property type="protein sequence ID" value="YNL119W"/>
    <property type="gene ID" value="YNL119W"/>
</dbReference>
<dbReference type="GeneID" id="855603"/>
<dbReference type="KEGG" id="sce:YNL119W"/>
<dbReference type="AGR" id="SGD:S000005063"/>
<dbReference type="SGD" id="S000005063">
    <property type="gene designation" value="NCS2"/>
</dbReference>
<dbReference type="VEuPathDB" id="FungiDB:YNL119W"/>
<dbReference type="eggNOG" id="KOG2594">
    <property type="taxonomic scope" value="Eukaryota"/>
</dbReference>
<dbReference type="GeneTree" id="ENSGT00390000008797"/>
<dbReference type="HOGENOM" id="CLU_024534_1_0_1"/>
<dbReference type="InParanoid" id="P53923"/>
<dbReference type="OMA" id="KQRKQMM"/>
<dbReference type="OrthoDB" id="25129at2759"/>
<dbReference type="BioCyc" id="YEAST:G3O-33141-MONOMER"/>
<dbReference type="UniPathway" id="UPA00988"/>
<dbReference type="BioGRID-ORCS" id="855603">
    <property type="hits" value="4 hits in 10 CRISPR screens"/>
</dbReference>
<dbReference type="CD-CODE" id="E03F929F">
    <property type="entry name" value="Stress granule"/>
</dbReference>
<dbReference type="ChiTaRS" id="NCS2">
    <property type="organism name" value="yeast"/>
</dbReference>
<dbReference type="PRO" id="PR:P53923"/>
<dbReference type="Proteomes" id="UP000002311">
    <property type="component" value="Chromosome XIV"/>
</dbReference>
<dbReference type="RNAct" id="P53923">
    <property type="molecule type" value="protein"/>
</dbReference>
<dbReference type="GO" id="GO:0005737">
    <property type="term" value="C:cytoplasm"/>
    <property type="evidence" value="ECO:0007005"/>
    <property type="project" value="SGD"/>
</dbReference>
<dbReference type="GO" id="GO:0005829">
    <property type="term" value="C:cytosol"/>
    <property type="evidence" value="ECO:0000314"/>
    <property type="project" value="UniProtKB"/>
</dbReference>
<dbReference type="GO" id="GO:0016779">
    <property type="term" value="F:nucleotidyltransferase activity"/>
    <property type="evidence" value="ECO:0007669"/>
    <property type="project" value="UniProtKB-UniRule"/>
</dbReference>
<dbReference type="GO" id="GO:0016783">
    <property type="term" value="F:sulfurtransferase activity"/>
    <property type="evidence" value="ECO:0000318"/>
    <property type="project" value="GO_Central"/>
</dbReference>
<dbReference type="GO" id="GO:0000049">
    <property type="term" value="F:tRNA binding"/>
    <property type="evidence" value="ECO:0007669"/>
    <property type="project" value="InterPro"/>
</dbReference>
<dbReference type="GO" id="GO:0001403">
    <property type="term" value="P:invasive growth in response to glucose limitation"/>
    <property type="evidence" value="ECO:0000315"/>
    <property type="project" value="SGD"/>
</dbReference>
<dbReference type="GO" id="GO:0032447">
    <property type="term" value="P:protein urmylation"/>
    <property type="evidence" value="ECO:0000315"/>
    <property type="project" value="SGD"/>
</dbReference>
<dbReference type="GO" id="GO:0007124">
    <property type="term" value="P:pseudohyphal growth"/>
    <property type="evidence" value="ECO:0000315"/>
    <property type="project" value="SGD"/>
</dbReference>
<dbReference type="GO" id="GO:0034227">
    <property type="term" value="P:tRNA thio-modification"/>
    <property type="evidence" value="ECO:0000315"/>
    <property type="project" value="UniProtKB"/>
</dbReference>
<dbReference type="GO" id="GO:0002143">
    <property type="term" value="P:tRNA wobble position uridine thiolation"/>
    <property type="evidence" value="ECO:0000315"/>
    <property type="project" value="SGD"/>
</dbReference>
<dbReference type="GO" id="GO:0002098">
    <property type="term" value="P:tRNA wobble uridine modification"/>
    <property type="evidence" value="ECO:0000315"/>
    <property type="project" value="UniProtKB"/>
</dbReference>
<dbReference type="Gene3D" id="3.40.50.620">
    <property type="entry name" value="HUPs"/>
    <property type="match status" value="1"/>
</dbReference>
<dbReference type="HAMAP" id="MF_03054">
    <property type="entry name" value="CTU2"/>
    <property type="match status" value="1"/>
</dbReference>
<dbReference type="InterPro" id="IPR019407">
    <property type="entry name" value="CTU2"/>
</dbReference>
<dbReference type="InterPro" id="IPR014729">
    <property type="entry name" value="Rossmann-like_a/b/a_fold"/>
</dbReference>
<dbReference type="PANTHER" id="PTHR20882">
    <property type="entry name" value="CYTOPLASMIC TRNA 2-THIOLATION PROTEIN 2"/>
    <property type="match status" value="1"/>
</dbReference>
<dbReference type="PANTHER" id="PTHR20882:SF14">
    <property type="entry name" value="CYTOPLASMIC TRNA 2-THIOLATION PROTEIN 2"/>
    <property type="match status" value="1"/>
</dbReference>
<dbReference type="Pfam" id="PF10288">
    <property type="entry name" value="CTU2"/>
    <property type="match status" value="1"/>
</dbReference>
<gene>
    <name evidence="1" type="primary">NCS2</name>
    <name evidence="1" type="synonym">CTU2</name>
    <name evidence="1" type="synonym">TUC2</name>
    <name type="ordered locus">YNL119W</name>
    <name type="ORF">N1913</name>
</gene>
<feature type="chain" id="PRO_0000203432" description="Cytoplasmic tRNA 2-thiolation protein 2">
    <location>
        <begin position="1"/>
        <end position="493"/>
    </location>
</feature>
<feature type="modified residue" description="Phosphoserine" evidence="12">
    <location>
        <position position="489"/>
    </location>
</feature>
<feature type="sequence variant" description="In strain: YJM230 and YJM320." evidence="8">
    <original>P</original>
    <variation>S</variation>
    <location>
        <position position="7"/>
    </location>
</feature>
<feature type="sequence variant" description="In strain: SK1, V1-09, YJM1129, YJM269, YJM270, YJM320, YJM326, YJM230, YJM339 and YJM627." evidence="8">
    <original>H</original>
    <variation>L</variation>
    <location>
        <position position="71"/>
    </location>
</feature>
<feature type="sequence variant" description="In strain: SK1, V1-09, YJM230, YJM320 and YJM339." evidence="8">
    <original>N</original>
    <variation>S</variation>
    <location>
        <position position="193"/>
    </location>
</feature>
<feature type="sequence variant" description="In strain: YJM627." evidence="8">
    <original>L</original>
    <variation>S</variation>
    <location>
        <position position="409"/>
    </location>
</feature>
<feature type="sequence variant" description="In strain: YJM627." evidence="8">
    <original>S</original>
    <variation>G</variation>
    <location>
        <position position="428"/>
    </location>
</feature>
<feature type="sequence variant" description="In strain: YJM230 and YJM320." evidence="8">
    <original>G</original>
    <variation>S</variation>
    <location>
        <position position="436"/>
    </location>
</feature>
<feature type="sequence variant" description="In strain: YJM1129, YJM269, YJM270, YJM326 and YJM627." evidence="8">
    <original>K</original>
    <variation>N</variation>
    <location>
        <position position="474"/>
    </location>
</feature>
<feature type="sequence conflict" description="In Ref. 4; AAU09777." evidence="11" ref="4">
    <original>Q</original>
    <variation>R</variation>
    <location>
        <position position="36"/>
    </location>
</feature>
<comment type="function">
    <text evidence="1 2 5 6 7 9 10">Plays a central role in 2-thiolation of mcm(5)S(2)U at tRNA wobble positions of tRNA(Lys), tRNA(Glu) and tRNA(Gln). May act by forming a heterodimer with NCS6 that ligates sulfur from thiocarboxylated URM1 onto the uridine of tRNAs at wobble position. Prior mcm(5) tRNA modification by the elongator complex is required for 2-thiolation. May also be involved in protein urmylation and in invasive and pseudohyphal growth. Inhibits replication of Brome mosaic virus.</text>
</comment>
<comment type="pathway">
    <text evidence="1">tRNA modification; 5-methoxycarbonylmethyl-2-thiouridine-tRNA biosynthesis.</text>
</comment>
<comment type="subunit">
    <text evidence="1 9">Interacts with NCS6 and URM1. May act by forming a heterodimer with NCS6.</text>
</comment>
<comment type="interaction">
    <interactant intactId="EBI-28871">
        <id>P53923</id>
    </interactant>
    <interactant intactId="EBI-24137">
        <id>P53088</id>
        <label>NCS6</label>
    </interactant>
    <organismsDiffer>false</organismsDiffer>
    <experiments>4</experiments>
</comment>
<comment type="interaction">
    <interactant intactId="EBI-28871">
        <id>P53923</id>
    </interactant>
    <interactant intactId="EBI-24940">
        <id>P40554</id>
        <label>URM1</label>
    </interactant>
    <organismsDiffer>false</organismsDiffer>
    <experiments>3</experiments>
</comment>
<comment type="subcellular location">
    <subcellularLocation>
        <location evidence="1 3 6">Cytoplasm</location>
    </subcellularLocation>
</comment>
<comment type="miscellaneous">
    <text evidence="4">Present with 2860 molecules/cell in log phase SD medium.</text>
</comment>
<comment type="similarity">
    <text evidence="1">Belongs to the CTU2/NCS2 family.</text>
</comment>
<sequence length="493" mass="56473">MECQRCPASARNPATVESRKEKFCDECFIKFVSTKQRKQMMKDEYFRNLFKVIYPFEKEGSVSKILLPLSHSDSGSLVMLDIVHDLLLEQTKQHNNRTGFTVDVLTVFTEENVSVIKERMESLINEKMSQLNKISNIFNVHFIDVNEFFNNASEVSTFIIDNENFEIFSKSKSVDDSNILTLKEILGKYCLNNSSRSDLISIIKTQLIKHFAYENGYNAIMWGHSMTKLSEVIISLVVKGKGSQIATFLDSESFDTLNNKPCKYKNLYPMKDLLSVEIESFLQIRNLAQFLINVEETNVKPNCLIARKSLPSLGQQKLVKNMTINEITNKYFQDIQNDYSNIISTVLRTADKLTQPKSSMAKPSQCQICQSKIYTNPSNWLNRITVTSPYPVETTEEKYLFKQWQDSKLGQSHTHYVELLNEIKQGASNSLDVEDGDVKLCYGCLILLNTSIKDKNLVWPKVDTMDITANATNKNKELSQILDQFEINSDGEE</sequence>
<protein>
    <recommendedName>
        <fullName evidence="1">Cytoplasmic tRNA 2-thiolation protein 2</fullName>
    </recommendedName>
    <alternativeName>
        <fullName evidence="1">Needs CLA4 to survive protein 2</fullName>
    </alternativeName>
    <alternativeName>
        <fullName evidence="1">Thiolation of uridine in cytoplasmic tRNA protein 2</fullName>
    </alternativeName>
</protein>
<name>CTU2_YEAST</name>
<keyword id="KW-0963">Cytoplasm</keyword>
<keyword id="KW-0597">Phosphoprotein</keyword>
<keyword id="KW-1185">Reference proteome</keyword>
<keyword id="KW-0819">tRNA processing</keyword>
<organism>
    <name type="scientific">Saccharomyces cerevisiae (strain ATCC 204508 / S288c)</name>
    <name type="common">Baker's yeast</name>
    <dbReference type="NCBI Taxonomy" id="559292"/>
    <lineage>
        <taxon>Eukaryota</taxon>
        <taxon>Fungi</taxon>
        <taxon>Dikarya</taxon>
        <taxon>Ascomycota</taxon>
        <taxon>Saccharomycotina</taxon>
        <taxon>Saccharomycetes</taxon>
        <taxon>Saccharomycetales</taxon>
        <taxon>Saccharomycetaceae</taxon>
        <taxon>Saccharomyces</taxon>
    </lineage>
</organism>
<evidence type="ECO:0000255" key="1">
    <source>
        <dbReference type="HAMAP-Rule" id="MF_03054"/>
    </source>
</evidence>
<evidence type="ECO:0000269" key="2">
    <source>
    </source>
</evidence>
<evidence type="ECO:0000269" key="3">
    <source>
    </source>
</evidence>
<evidence type="ECO:0000269" key="4">
    <source>
    </source>
</evidence>
<evidence type="ECO:0000269" key="5">
    <source>
    </source>
</evidence>
<evidence type="ECO:0000269" key="6">
    <source>
    </source>
</evidence>
<evidence type="ECO:0000269" key="7">
    <source>
    </source>
</evidence>
<evidence type="ECO:0000269" key="8">
    <source>
    </source>
</evidence>
<evidence type="ECO:0000269" key="9">
    <source>
    </source>
</evidence>
<evidence type="ECO:0000269" key="10">
    <source>
    </source>
</evidence>
<evidence type="ECO:0000305" key="11"/>
<evidence type="ECO:0007744" key="12">
    <source>
    </source>
</evidence>
<accession>P53923</accession>
<accession>B0KZR6</accession>
<accession>B0KZS5</accession>
<accession>B0KZU3</accession>
<accession>B0KZW1</accession>
<accession>B0L006</accession>
<accession>D6W163</accession>
<accession>Q66R25</accession>
<proteinExistence type="evidence at protein level"/>